<gene>
    <name evidence="1" type="primary">PA</name>
    <name type="synonym">P3</name>
</gene>
<sequence length="709" mass="81884">MSKTFAEIAETFLEPEAVRIAKEAVEEYGDHERKIIQIGIHFQVCCMFCDEYLSTNGSDRFVLIEGRKRGTAVSLQNELCKSYDLEPLPFLCDIFDREEKQFVEIGITRKADDSYFQSKFGKLGNSCKIFVFSYDGRLDKNCEGPMEEQKLRIFSFLATAADFLRKENMFNEIFLPDNEETIIEMKKGKTFLKLRDESVPLPFQTYEQMKDYCEKFKGNPRELASKVSQMQSNIKLPIKHYEQNKFRQIRLPKGPMAPYTHKFLMEEAWMFTKISDPERSRAGEILIDFFKKGNLSAIRPKDKPLQGKYPIHYKNLWNQIKAAIADRTMVISENDHSEFLGGIGRASKKIPEVSLTQDVITTEGLKQSENKLPEPRSFPKWFNAEWMWAIKDSDLTGWVPMAEYPPADNELEDYAEHLNKTMEGVLQGTNCAREMGKCILTVGALMTECRLFPGKIKVVPIYARSKERKSMQEGLPVPSEMDCLFGICVKSKSHLNKDDGMYTIITFEFSIREPNLEKHQKYTVFEAGHTTVRMKKGESVIGREVPLYLYCRTTALSKIKNDWLSKARRCFITTMDTVETICLRESAKAEENLVEKTLNEKQMWIGKKNGELIAQPLREALRVQLVQQFYFCIYNDSQLEGFCNEQKKILMALEGDKKNKSSFGFNPEGLLEKIEECLINNPMCLFMAQRLNELVIEASKRGAKFFKID</sequence>
<organism>
    <name type="scientific">Influenza C virus (strain C/JJ/1950)</name>
    <dbReference type="NCBI Taxonomy" id="11560"/>
    <lineage>
        <taxon>Viruses</taxon>
        <taxon>Riboviria</taxon>
        <taxon>Orthornavirae</taxon>
        <taxon>Negarnaviricota</taxon>
        <taxon>Polyploviricotina</taxon>
        <taxon>Insthoviricetes</taxon>
        <taxon>Articulavirales</taxon>
        <taxon>Orthomyxoviridae</taxon>
        <taxon>Gammainfluenzavirus</taxon>
        <taxon>Gammainfluenzavirus influenzae</taxon>
        <taxon>Influenza C virus</taxon>
    </lineage>
</organism>
<keyword id="KW-1157">Cap snatching</keyword>
<keyword id="KW-0255">Endonuclease</keyword>
<keyword id="KW-1262">Eukaryotic host gene expression shutoff by virus</keyword>
<keyword id="KW-1191">Eukaryotic host transcription shutoff by virus</keyword>
<keyword id="KW-1035">Host cytoplasm</keyword>
<keyword id="KW-1190">Host gene expression shutoff by virus</keyword>
<keyword id="KW-1048">Host nucleus</keyword>
<keyword id="KW-0945">Host-virus interaction</keyword>
<keyword id="KW-0378">Hydrolase</keyword>
<keyword id="KW-1104">Inhibition of host RNA polymerase II by virus</keyword>
<keyword id="KW-0464">Manganese</keyword>
<keyword id="KW-0479">Metal-binding</keyword>
<keyword id="KW-0540">Nuclease</keyword>
<keyword id="KW-0597">Phosphoprotein</keyword>
<keyword id="KW-0688">Ribosomal frameshifting</keyword>
<proteinExistence type="inferred from homology"/>
<dbReference type="EC" id="3.1.-.-" evidence="1"/>
<dbReference type="EMBL" id="M28062">
    <property type="protein sequence ID" value="AAA43813.1"/>
    <property type="molecule type" value="Genomic_RNA"/>
</dbReference>
<dbReference type="PIR" id="C34225">
    <property type="entry name" value="P2IV50"/>
</dbReference>
<dbReference type="SMR" id="P13878"/>
<dbReference type="GO" id="GO:0030430">
    <property type="term" value="C:host cell cytoplasm"/>
    <property type="evidence" value="ECO:0007669"/>
    <property type="project" value="UniProtKB-SubCell"/>
</dbReference>
<dbReference type="GO" id="GO:0042025">
    <property type="term" value="C:host cell nucleus"/>
    <property type="evidence" value="ECO:0007669"/>
    <property type="project" value="UniProtKB-SubCell"/>
</dbReference>
<dbReference type="GO" id="GO:0004519">
    <property type="term" value="F:endonuclease activity"/>
    <property type="evidence" value="ECO:0007669"/>
    <property type="project" value="UniProtKB-KW"/>
</dbReference>
<dbReference type="GO" id="GO:0046872">
    <property type="term" value="F:metal ion binding"/>
    <property type="evidence" value="ECO:0007669"/>
    <property type="project" value="UniProtKB-KW"/>
</dbReference>
<dbReference type="GO" id="GO:0003723">
    <property type="term" value="F:RNA binding"/>
    <property type="evidence" value="ECO:0007669"/>
    <property type="project" value="UniProtKB-UniRule"/>
</dbReference>
<dbReference type="GO" id="GO:0075526">
    <property type="term" value="P:cap snatching"/>
    <property type="evidence" value="ECO:0007669"/>
    <property type="project" value="UniProtKB-UniRule"/>
</dbReference>
<dbReference type="GO" id="GO:0006351">
    <property type="term" value="P:DNA-templated transcription"/>
    <property type="evidence" value="ECO:0007669"/>
    <property type="project" value="UniProtKB-UniRule"/>
</dbReference>
<dbReference type="GO" id="GO:0039657">
    <property type="term" value="P:symbiont-mediated suppression of host gene expression"/>
    <property type="evidence" value="ECO:0007669"/>
    <property type="project" value="UniProtKB-KW"/>
</dbReference>
<dbReference type="GO" id="GO:0039523">
    <property type="term" value="P:symbiont-mediated suppression of host mRNA transcription via inhibition of RNA polymerase II activity"/>
    <property type="evidence" value="ECO:0007669"/>
    <property type="project" value="UniProtKB-UniRule"/>
</dbReference>
<dbReference type="GO" id="GO:0039694">
    <property type="term" value="P:viral RNA genome replication"/>
    <property type="evidence" value="ECO:0007669"/>
    <property type="project" value="InterPro"/>
</dbReference>
<dbReference type="GO" id="GO:0075523">
    <property type="term" value="P:viral translational frameshifting"/>
    <property type="evidence" value="ECO:0007669"/>
    <property type="project" value="UniProtKB-KW"/>
</dbReference>
<dbReference type="Gene3D" id="3.40.91.90">
    <property type="entry name" value="Influenza RNA-dependent RNA polymerase subunit PA, endonuclease domain"/>
    <property type="match status" value="1"/>
</dbReference>
<dbReference type="HAMAP" id="MF_04063">
    <property type="entry name" value="INFV_PA"/>
    <property type="match status" value="1"/>
</dbReference>
<dbReference type="InterPro" id="IPR037534">
    <property type="entry name" value="INFV_PA"/>
</dbReference>
<dbReference type="InterPro" id="IPR001009">
    <property type="entry name" value="PA/PA-X"/>
</dbReference>
<dbReference type="InterPro" id="IPR038372">
    <property type="entry name" value="PA/PA-X_sf"/>
</dbReference>
<dbReference type="Pfam" id="PF00603">
    <property type="entry name" value="Flu_PA"/>
    <property type="match status" value="1"/>
</dbReference>
<organismHost>
    <name type="scientific">Homo sapiens</name>
    <name type="common">Human</name>
    <dbReference type="NCBI Taxonomy" id="9606"/>
</organismHost>
<organismHost>
    <name type="scientific">Sus scrofa</name>
    <name type="common">Pig</name>
    <dbReference type="NCBI Taxonomy" id="9823"/>
</organismHost>
<evidence type="ECO:0000255" key="1">
    <source>
        <dbReference type="HAMAP-Rule" id="MF_04063"/>
    </source>
</evidence>
<accession>P13878</accession>
<feature type="chain" id="PRO_0000078810" description="Polymerase acidic protein">
    <location>
        <begin position="1"/>
        <end position="709"/>
    </location>
</feature>
<feature type="short sequence motif" description="Nuclear localization signal 1 (NLS1)" evidence="1">
    <location>
        <begin position="109"/>
        <end position="124"/>
    </location>
</feature>
<feature type="short sequence motif" description="Nuclear localization signal 2 (NLS2)" evidence="1">
    <location>
        <begin position="166"/>
        <end position="228"/>
    </location>
</feature>
<feature type="binding site" evidence="1">
    <location>
        <position position="41"/>
    </location>
    <ligand>
        <name>Mn(2+)</name>
        <dbReference type="ChEBI" id="CHEBI:29035"/>
        <label>1</label>
    </ligand>
</feature>
<feature type="binding site" evidence="1">
    <location>
        <position position="65"/>
    </location>
    <ligand>
        <name>Mn(2+)</name>
        <dbReference type="ChEBI" id="CHEBI:29035"/>
        <label>2</label>
    </ligand>
</feature>
<feature type="binding site" evidence="1">
    <location>
        <position position="93"/>
    </location>
    <ligand>
        <name>Mn(2+)</name>
        <dbReference type="ChEBI" id="CHEBI:29035"/>
        <label>1</label>
    </ligand>
</feature>
<feature type="binding site" evidence="1">
    <location>
        <position position="93"/>
    </location>
    <ligand>
        <name>Mn(2+)</name>
        <dbReference type="ChEBI" id="CHEBI:29035"/>
        <label>2</label>
    </ligand>
</feature>
<feature type="binding site" evidence="1">
    <location>
        <position position="104"/>
    </location>
    <ligand>
        <name>Mn(2+)</name>
        <dbReference type="ChEBI" id="CHEBI:29035"/>
        <label>1</label>
    </ligand>
</feature>
<feature type="binding site" evidence="1">
    <location>
        <position position="105"/>
    </location>
    <ligand>
        <name>Mn(2+)</name>
        <dbReference type="ChEBI" id="CHEBI:29035"/>
        <label>1</label>
    </ligand>
</feature>
<comment type="function">
    <text evidence="1">Plays an essential role in viral RNA transcription and replication by forming the heterotrimeric polymerase complex together with PB1 and PB2 subunits. The complex transcribes viral mRNAs by using a unique mechanism called cap-snatching. It consists in the hijacking and cleavage of host capped pre-mRNAs. These short capped RNAs are then used as primers for viral mRNAs. The PB2 subunit is responsible for the binding of the 5' cap of cellular pre-mRNAs which are subsequently cleaved after 10-13 nucleotides by the PA subunit that carries the endonuclease activity.</text>
</comment>
<comment type="cofactor">
    <cofactor evidence="1">
        <name>Mn(2+)</name>
        <dbReference type="ChEBI" id="CHEBI:29035"/>
    </cofactor>
    <text evidence="1">Binds 2 manganese ions per subunit.</text>
</comment>
<comment type="subunit">
    <text evidence="1">Influenza RNA polymerase is composed of three subunits: PB1, PB2 and PA. Interacts (via C-terminus) with PB1 (via N-terminus).</text>
</comment>
<comment type="subcellular location">
    <subcellularLocation>
        <location evidence="1">Host cytoplasm</location>
    </subcellularLocation>
    <subcellularLocation>
        <location evidence="1">Host nucleus</location>
    </subcellularLocation>
    <text evidence="1">PB1 and PA are transported in the host nucleus as a complex.</text>
</comment>
<comment type="alternative products">
    <event type="ribosomal frameshifting"/>
    <isoform>
        <id>P13878-1</id>
        <name>PA</name>
        <sequence type="displayed"/>
    </isoform>
    <isoform>
        <id>P13878-2</id>
        <name>PA-X</name>
        <sequence type="not described"/>
    </isoform>
</comment>
<comment type="PTM">
    <text evidence="1">Phosphorylated on serines and threonines by host kinases, including human casein kinase II.</text>
</comment>
<comment type="similarity">
    <text evidence="1">Belongs to the influenza viruses PA family.</text>
</comment>
<protein>
    <recommendedName>
        <fullName evidence="1">Polymerase acidic protein</fullName>
        <ecNumber evidence="1">3.1.-.-</ecNumber>
    </recommendedName>
    <alternativeName>
        <fullName evidence="1">RNA-directed RNA polymerase subunit P2</fullName>
    </alternativeName>
</protein>
<reference key="1">
    <citation type="journal article" date="1989" name="Virology">
        <title>Comparison of the three large polymerase proteins of influenza A, B, and C viruses.</title>
        <authorList>
            <person name="Yamashita M."/>
            <person name="Krystal M."/>
            <person name="Palese P."/>
        </authorList>
    </citation>
    <scope>NUCLEOTIDE SEQUENCE [GENOMIC RNA]</scope>
</reference>
<name>PA_INCJJ</name>